<feature type="chain" id="PRO_0000347726" description="Alanine--tRNA ligase">
    <location>
        <begin position="1"/>
        <end position="886"/>
    </location>
</feature>
<feature type="binding site" evidence="1">
    <location>
        <position position="564"/>
    </location>
    <ligand>
        <name>Zn(2+)</name>
        <dbReference type="ChEBI" id="CHEBI:29105"/>
    </ligand>
</feature>
<feature type="binding site" evidence="1">
    <location>
        <position position="568"/>
    </location>
    <ligand>
        <name>Zn(2+)</name>
        <dbReference type="ChEBI" id="CHEBI:29105"/>
    </ligand>
</feature>
<feature type="binding site" evidence="1">
    <location>
        <position position="666"/>
    </location>
    <ligand>
        <name>Zn(2+)</name>
        <dbReference type="ChEBI" id="CHEBI:29105"/>
    </ligand>
</feature>
<feature type="binding site" evidence="1">
    <location>
        <position position="670"/>
    </location>
    <ligand>
        <name>Zn(2+)</name>
        <dbReference type="ChEBI" id="CHEBI:29105"/>
    </ligand>
</feature>
<comment type="function">
    <text evidence="1">Catalyzes the attachment of alanine to tRNA(Ala) in a two-step reaction: alanine is first activated by ATP to form Ala-AMP and then transferred to the acceptor end of tRNA(Ala). Also edits incorrectly charged Ser-tRNA(Ala) and Gly-tRNA(Ala) via its editing domain.</text>
</comment>
<comment type="catalytic activity">
    <reaction evidence="1">
        <text>tRNA(Ala) + L-alanine + ATP = L-alanyl-tRNA(Ala) + AMP + diphosphate</text>
        <dbReference type="Rhea" id="RHEA:12540"/>
        <dbReference type="Rhea" id="RHEA-COMP:9657"/>
        <dbReference type="Rhea" id="RHEA-COMP:9923"/>
        <dbReference type="ChEBI" id="CHEBI:30616"/>
        <dbReference type="ChEBI" id="CHEBI:33019"/>
        <dbReference type="ChEBI" id="CHEBI:57972"/>
        <dbReference type="ChEBI" id="CHEBI:78442"/>
        <dbReference type="ChEBI" id="CHEBI:78497"/>
        <dbReference type="ChEBI" id="CHEBI:456215"/>
        <dbReference type="EC" id="6.1.1.7"/>
    </reaction>
</comment>
<comment type="cofactor">
    <cofactor evidence="1">
        <name>Zn(2+)</name>
        <dbReference type="ChEBI" id="CHEBI:29105"/>
    </cofactor>
    <text evidence="1">Binds 1 zinc ion per subunit.</text>
</comment>
<comment type="subcellular location">
    <subcellularLocation>
        <location evidence="1">Cytoplasm</location>
    </subcellularLocation>
</comment>
<comment type="domain">
    <text evidence="1">Consists of three domains; the N-terminal catalytic domain, the editing domain and the C-terminal C-Ala domain. The editing domain removes incorrectly charged amino acids, while the C-Ala domain, along with tRNA(Ala), serves as a bridge to cooperatively bring together the editing and aminoacylation centers thus stimulating deacylation of misacylated tRNAs.</text>
</comment>
<comment type="similarity">
    <text evidence="1">Belongs to the class-II aminoacyl-tRNA synthetase family.</text>
</comment>
<sequence length="886" mass="98845">MTSQLIKKIVTGDEIRNAFLKFYSEKLHKIIPSASLIPDDPTVMLTIAGMLPFKPVFLGLKERPSKRATSSQKCIRTNDIENVGVTARHHTFFEMLGNFSFGDYFKREAIQWAWELVTNIYQLSVENIIVSVFHEDEESAKIWIDEIGIHPDRIVKLGEEDNFWSSGKTGPCGPCSELYYDFHPEKGLQNIDLEDGDRFIEFYNLVFMQYNRDQNGKLTDLKFKNIDTGMGLERMAQILQKKQNNYETDLIFPIIQKICEIANIDYFSSDDKNKISLKIIGDHTRAVIHLISDGVAASNLGRGYILRRLIRRMVRHGRLLGITNEFLPHIASVGINLMQNNYPDLKNNNDLILNEIKIEEIRFRETLERGEKLLDELISSGQKLISGFKAFELYDTYGFPLELTVEIAEENSISVDVKGFEEEMNAQKERAKAASSNIDLTLEGSLEREIDLFNKTVFNGYNSLLSEAEIKGIFLDSTLVKQASEGQKVLIVLDQTTFYGESGGQVGDIGTIFSKDVEVLVDNVMRKKNVFLHHGTIKKGILTIGQKVKTNVSSSNRAKAAANHTATHLLQSALKLIVNESVGQKGSLVAFNKLRFDFNSSNPISKDQISKIETLVNSWIMENHALEIKNMSKSEALEKGAVAMFGEKYDDEVRVVNVPGVSMELCGGTHVKTTSELGSFKIISEEGISAGVRRIEALSGQSALDYFSDRNALVNQLSDLLKANPNQLFERVNNLQSELINKNKEIQKMKDEIAYFKYSSIKSSAEIVNSFSILVNQIDGLDGNSLQSAALNLTSHLGNKAIVILGGIPNPENRKLLFVVSLGDDAVKIGLHAGKLINEIARICSGGGGGKPNFAQAGAKDIDKLSDAIDYAKNYLQKTLDSHSDK</sequence>
<name>SYA_PROM0</name>
<proteinExistence type="inferred from homology"/>
<reference key="1">
    <citation type="journal article" date="2007" name="PLoS Genet.">
        <title>Patterns and implications of gene gain and loss in the evolution of Prochlorococcus.</title>
        <authorList>
            <person name="Kettler G.C."/>
            <person name="Martiny A.C."/>
            <person name="Huang K."/>
            <person name="Zucker J."/>
            <person name="Coleman M.L."/>
            <person name="Rodrigue S."/>
            <person name="Chen F."/>
            <person name="Lapidus A."/>
            <person name="Ferriera S."/>
            <person name="Johnson J."/>
            <person name="Steglich C."/>
            <person name="Church G.M."/>
            <person name="Richardson P."/>
            <person name="Chisholm S.W."/>
        </authorList>
    </citation>
    <scope>NUCLEOTIDE SEQUENCE [LARGE SCALE GENOMIC DNA]</scope>
    <source>
        <strain>MIT 9301</strain>
    </source>
</reference>
<dbReference type="EC" id="6.1.1.7" evidence="1"/>
<dbReference type="EMBL" id="CP000576">
    <property type="protein sequence ID" value="ABO16670.1"/>
    <property type="molecule type" value="Genomic_DNA"/>
</dbReference>
<dbReference type="RefSeq" id="WP_011862075.1">
    <property type="nucleotide sequence ID" value="NC_009091.1"/>
</dbReference>
<dbReference type="SMR" id="A3PA95"/>
<dbReference type="STRING" id="167546.P9301_00471"/>
<dbReference type="KEGG" id="pmg:P9301_00471"/>
<dbReference type="eggNOG" id="COG0013">
    <property type="taxonomic scope" value="Bacteria"/>
</dbReference>
<dbReference type="HOGENOM" id="CLU_004485_1_1_3"/>
<dbReference type="OrthoDB" id="9803884at2"/>
<dbReference type="Proteomes" id="UP000001430">
    <property type="component" value="Chromosome"/>
</dbReference>
<dbReference type="GO" id="GO:0005829">
    <property type="term" value="C:cytosol"/>
    <property type="evidence" value="ECO:0007669"/>
    <property type="project" value="TreeGrafter"/>
</dbReference>
<dbReference type="GO" id="GO:0004813">
    <property type="term" value="F:alanine-tRNA ligase activity"/>
    <property type="evidence" value="ECO:0007669"/>
    <property type="project" value="UniProtKB-UniRule"/>
</dbReference>
<dbReference type="GO" id="GO:0002161">
    <property type="term" value="F:aminoacyl-tRNA deacylase activity"/>
    <property type="evidence" value="ECO:0007669"/>
    <property type="project" value="TreeGrafter"/>
</dbReference>
<dbReference type="GO" id="GO:0005524">
    <property type="term" value="F:ATP binding"/>
    <property type="evidence" value="ECO:0007669"/>
    <property type="project" value="UniProtKB-UniRule"/>
</dbReference>
<dbReference type="GO" id="GO:0000049">
    <property type="term" value="F:tRNA binding"/>
    <property type="evidence" value="ECO:0007669"/>
    <property type="project" value="UniProtKB-KW"/>
</dbReference>
<dbReference type="GO" id="GO:0008270">
    <property type="term" value="F:zinc ion binding"/>
    <property type="evidence" value="ECO:0007669"/>
    <property type="project" value="UniProtKB-UniRule"/>
</dbReference>
<dbReference type="GO" id="GO:0006419">
    <property type="term" value="P:alanyl-tRNA aminoacylation"/>
    <property type="evidence" value="ECO:0007669"/>
    <property type="project" value="UniProtKB-UniRule"/>
</dbReference>
<dbReference type="CDD" id="cd00673">
    <property type="entry name" value="AlaRS_core"/>
    <property type="match status" value="1"/>
</dbReference>
<dbReference type="FunFam" id="2.40.30.130:FF:000001">
    <property type="entry name" value="Alanine--tRNA ligase"/>
    <property type="match status" value="1"/>
</dbReference>
<dbReference type="FunFam" id="3.10.310.40:FF:000001">
    <property type="entry name" value="Alanine--tRNA ligase"/>
    <property type="match status" value="1"/>
</dbReference>
<dbReference type="FunFam" id="3.30.54.20:FF:000001">
    <property type="entry name" value="Alanine--tRNA ligase"/>
    <property type="match status" value="1"/>
</dbReference>
<dbReference type="FunFam" id="3.30.930.10:FF:000004">
    <property type="entry name" value="Alanine--tRNA ligase"/>
    <property type="match status" value="1"/>
</dbReference>
<dbReference type="FunFam" id="3.30.980.10:FF:000004">
    <property type="entry name" value="Alanine--tRNA ligase, cytoplasmic"/>
    <property type="match status" value="1"/>
</dbReference>
<dbReference type="Gene3D" id="2.40.30.130">
    <property type="match status" value="1"/>
</dbReference>
<dbReference type="Gene3D" id="3.10.310.40">
    <property type="match status" value="1"/>
</dbReference>
<dbReference type="Gene3D" id="3.30.54.20">
    <property type="match status" value="1"/>
</dbReference>
<dbReference type="Gene3D" id="6.10.250.550">
    <property type="match status" value="1"/>
</dbReference>
<dbReference type="Gene3D" id="3.30.930.10">
    <property type="entry name" value="Bira Bifunctional Protein, Domain 2"/>
    <property type="match status" value="1"/>
</dbReference>
<dbReference type="Gene3D" id="3.30.980.10">
    <property type="entry name" value="Threonyl-trna Synthetase, Chain A, domain 2"/>
    <property type="match status" value="1"/>
</dbReference>
<dbReference type="HAMAP" id="MF_00036_B">
    <property type="entry name" value="Ala_tRNA_synth_B"/>
    <property type="match status" value="1"/>
</dbReference>
<dbReference type="InterPro" id="IPR045864">
    <property type="entry name" value="aa-tRNA-synth_II/BPL/LPL"/>
</dbReference>
<dbReference type="InterPro" id="IPR002318">
    <property type="entry name" value="Ala-tRNA-lgiase_IIc"/>
</dbReference>
<dbReference type="InterPro" id="IPR018162">
    <property type="entry name" value="Ala-tRNA-ligase_IIc_anticod-bd"/>
</dbReference>
<dbReference type="InterPro" id="IPR018165">
    <property type="entry name" value="Ala-tRNA-synth_IIc_core"/>
</dbReference>
<dbReference type="InterPro" id="IPR018164">
    <property type="entry name" value="Ala-tRNA-synth_IIc_N"/>
</dbReference>
<dbReference type="InterPro" id="IPR050058">
    <property type="entry name" value="Ala-tRNA_ligase"/>
</dbReference>
<dbReference type="InterPro" id="IPR023033">
    <property type="entry name" value="Ala_tRNA_ligase_euk/bac"/>
</dbReference>
<dbReference type="InterPro" id="IPR003156">
    <property type="entry name" value="DHHA1_dom"/>
</dbReference>
<dbReference type="InterPro" id="IPR018163">
    <property type="entry name" value="Thr/Ala-tRNA-synth_IIc_edit"/>
</dbReference>
<dbReference type="InterPro" id="IPR009000">
    <property type="entry name" value="Transl_B-barrel_sf"/>
</dbReference>
<dbReference type="InterPro" id="IPR012947">
    <property type="entry name" value="tRNA_SAD"/>
</dbReference>
<dbReference type="NCBIfam" id="TIGR00344">
    <property type="entry name" value="alaS"/>
    <property type="match status" value="1"/>
</dbReference>
<dbReference type="PANTHER" id="PTHR11777:SF9">
    <property type="entry name" value="ALANINE--TRNA LIGASE, CYTOPLASMIC"/>
    <property type="match status" value="1"/>
</dbReference>
<dbReference type="PANTHER" id="PTHR11777">
    <property type="entry name" value="ALANYL-TRNA SYNTHETASE"/>
    <property type="match status" value="1"/>
</dbReference>
<dbReference type="Pfam" id="PF02272">
    <property type="entry name" value="DHHA1"/>
    <property type="match status" value="1"/>
</dbReference>
<dbReference type="Pfam" id="PF01411">
    <property type="entry name" value="tRNA-synt_2c"/>
    <property type="match status" value="1"/>
</dbReference>
<dbReference type="Pfam" id="PF07973">
    <property type="entry name" value="tRNA_SAD"/>
    <property type="match status" value="1"/>
</dbReference>
<dbReference type="PRINTS" id="PR00980">
    <property type="entry name" value="TRNASYNTHALA"/>
</dbReference>
<dbReference type="SMART" id="SM00863">
    <property type="entry name" value="tRNA_SAD"/>
    <property type="match status" value="1"/>
</dbReference>
<dbReference type="SUPFAM" id="SSF55681">
    <property type="entry name" value="Class II aaRS and biotin synthetases"/>
    <property type="match status" value="1"/>
</dbReference>
<dbReference type="SUPFAM" id="SSF101353">
    <property type="entry name" value="Putative anticodon-binding domain of alanyl-tRNA synthetase (AlaRS)"/>
    <property type="match status" value="1"/>
</dbReference>
<dbReference type="SUPFAM" id="SSF55186">
    <property type="entry name" value="ThrRS/AlaRS common domain"/>
    <property type="match status" value="1"/>
</dbReference>
<dbReference type="SUPFAM" id="SSF50447">
    <property type="entry name" value="Translation proteins"/>
    <property type="match status" value="1"/>
</dbReference>
<dbReference type="PROSITE" id="PS50860">
    <property type="entry name" value="AA_TRNA_LIGASE_II_ALA"/>
    <property type="match status" value="1"/>
</dbReference>
<gene>
    <name evidence="1" type="primary">alaS</name>
    <name type="ordered locus">P9301_00471</name>
</gene>
<keyword id="KW-0030">Aminoacyl-tRNA synthetase</keyword>
<keyword id="KW-0067">ATP-binding</keyword>
<keyword id="KW-0963">Cytoplasm</keyword>
<keyword id="KW-0436">Ligase</keyword>
<keyword id="KW-0479">Metal-binding</keyword>
<keyword id="KW-0547">Nucleotide-binding</keyword>
<keyword id="KW-0648">Protein biosynthesis</keyword>
<keyword id="KW-1185">Reference proteome</keyword>
<keyword id="KW-0694">RNA-binding</keyword>
<keyword id="KW-0820">tRNA-binding</keyword>
<keyword id="KW-0862">Zinc</keyword>
<protein>
    <recommendedName>
        <fullName evidence="1">Alanine--tRNA ligase</fullName>
        <ecNumber evidence="1">6.1.1.7</ecNumber>
    </recommendedName>
    <alternativeName>
        <fullName evidence="1">Alanyl-tRNA synthetase</fullName>
        <shortName evidence="1">AlaRS</shortName>
    </alternativeName>
</protein>
<organism>
    <name type="scientific">Prochlorococcus marinus (strain MIT 9301)</name>
    <dbReference type="NCBI Taxonomy" id="167546"/>
    <lineage>
        <taxon>Bacteria</taxon>
        <taxon>Bacillati</taxon>
        <taxon>Cyanobacteriota</taxon>
        <taxon>Cyanophyceae</taxon>
        <taxon>Synechococcales</taxon>
        <taxon>Prochlorococcaceae</taxon>
        <taxon>Prochlorococcus</taxon>
    </lineage>
</organism>
<accession>A3PA95</accession>
<evidence type="ECO:0000255" key="1">
    <source>
        <dbReference type="HAMAP-Rule" id="MF_00036"/>
    </source>
</evidence>